<comment type="similarity">
    <text evidence="1">Belongs to the UPF0512 family.</text>
</comment>
<protein>
    <recommendedName>
        <fullName>UPF0512 protein B</fullName>
    </recommendedName>
</protein>
<feature type="chain" id="PRO_0000317340" description="UPF0512 protein B">
    <location>
        <begin position="1"/>
        <end position="87"/>
    </location>
</feature>
<dbReference type="EMBL" id="AAFI02000008">
    <property type="protein sequence ID" value="EAL71266.1"/>
    <property type="molecule type" value="Genomic_DNA"/>
</dbReference>
<dbReference type="RefSeq" id="XP_645301.1">
    <property type="nucleotide sequence ID" value="XM_640209.1"/>
</dbReference>
<dbReference type="FunCoup" id="Q75JQ6">
    <property type="interactions" value="640"/>
</dbReference>
<dbReference type="PaxDb" id="44689-DDB0266564"/>
<dbReference type="EnsemblProtists" id="EAL71266">
    <property type="protein sequence ID" value="EAL71266"/>
    <property type="gene ID" value="DDB_G0272228"/>
</dbReference>
<dbReference type="GeneID" id="8618467"/>
<dbReference type="KEGG" id="ddi:DDB_G0272228"/>
<dbReference type="dictyBase" id="DDB_G0272228"/>
<dbReference type="HOGENOM" id="CLU_194865_0_0_1"/>
<dbReference type="InParanoid" id="Q75JQ6"/>
<dbReference type="PRO" id="PR:Q75JQ6"/>
<dbReference type="Proteomes" id="UP000002195">
    <property type="component" value="Chromosome 2"/>
</dbReference>
<accession>Q75JQ6</accession>
<accession>Q559N3</accession>
<sequence length="87" mass="8814">MAIFKSISSISNSTVSIGSTIGASNQTGSNINDNSIACFDGGLRGNGGFNGGWGGIGGFNGGCGGSNANIINLDIDIGRRHHRRHCC</sequence>
<proteinExistence type="inferred from homology"/>
<name>U512B_DICDI</name>
<keyword id="KW-1185">Reference proteome</keyword>
<evidence type="ECO:0000305" key="1"/>
<gene>
    <name type="ORF">DDB_G0272228</name>
</gene>
<organism>
    <name type="scientific">Dictyostelium discoideum</name>
    <name type="common">Social amoeba</name>
    <dbReference type="NCBI Taxonomy" id="44689"/>
    <lineage>
        <taxon>Eukaryota</taxon>
        <taxon>Amoebozoa</taxon>
        <taxon>Evosea</taxon>
        <taxon>Eumycetozoa</taxon>
        <taxon>Dictyostelia</taxon>
        <taxon>Dictyosteliales</taxon>
        <taxon>Dictyosteliaceae</taxon>
        <taxon>Dictyostelium</taxon>
    </lineage>
</organism>
<reference key="1">
    <citation type="journal article" date="2002" name="Nature">
        <title>Sequence and analysis of chromosome 2 of Dictyostelium discoideum.</title>
        <authorList>
            <person name="Gloeckner G."/>
            <person name="Eichinger L."/>
            <person name="Szafranski K."/>
            <person name="Pachebat J.A."/>
            <person name="Bankier A.T."/>
            <person name="Dear P.H."/>
            <person name="Lehmann R."/>
            <person name="Baumgart C."/>
            <person name="Parra G."/>
            <person name="Abril J.F."/>
            <person name="Guigo R."/>
            <person name="Kumpf K."/>
            <person name="Tunggal B."/>
            <person name="Cox E.C."/>
            <person name="Quail M.A."/>
            <person name="Platzer M."/>
            <person name="Rosenthal A."/>
            <person name="Noegel A.A."/>
        </authorList>
    </citation>
    <scope>NUCLEOTIDE SEQUENCE [LARGE SCALE GENOMIC DNA]</scope>
    <source>
        <strain>AX4</strain>
    </source>
</reference>
<reference key="2">
    <citation type="journal article" date="2005" name="Nature">
        <title>The genome of the social amoeba Dictyostelium discoideum.</title>
        <authorList>
            <person name="Eichinger L."/>
            <person name="Pachebat J.A."/>
            <person name="Gloeckner G."/>
            <person name="Rajandream M.A."/>
            <person name="Sucgang R."/>
            <person name="Berriman M."/>
            <person name="Song J."/>
            <person name="Olsen R."/>
            <person name="Szafranski K."/>
            <person name="Xu Q."/>
            <person name="Tunggal B."/>
            <person name="Kummerfeld S."/>
            <person name="Madera M."/>
            <person name="Konfortov B.A."/>
            <person name="Rivero F."/>
            <person name="Bankier A.T."/>
            <person name="Lehmann R."/>
            <person name="Hamlin N."/>
            <person name="Davies R."/>
            <person name="Gaudet P."/>
            <person name="Fey P."/>
            <person name="Pilcher K."/>
            <person name="Chen G."/>
            <person name="Saunders D."/>
            <person name="Sodergren E.J."/>
            <person name="Davis P."/>
            <person name="Kerhornou A."/>
            <person name="Nie X."/>
            <person name="Hall N."/>
            <person name="Anjard C."/>
            <person name="Hemphill L."/>
            <person name="Bason N."/>
            <person name="Farbrother P."/>
            <person name="Desany B."/>
            <person name="Just E."/>
            <person name="Morio T."/>
            <person name="Rost R."/>
            <person name="Churcher C.M."/>
            <person name="Cooper J."/>
            <person name="Haydock S."/>
            <person name="van Driessche N."/>
            <person name="Cronin A."/>
            <person name="Goodhead I."/>
            <person name="Muzny D.M."/>
            <person name="Mourier T."/>
            <person name="Pain A."/>
            <person name="Lu M."/>
            <person name="Harper D."/>
            <person name="Lindsay R."/>
            <person name="Hauser H."/>
            <person name="James K.D."/>
            <person name="Quiles M."/>
            <person name="Madan Babu M."/>
            <person name="Saito T."/>
            <person name="Buchrieser C."/>
            <person name="Wardroper A."/>
            <person name="Felder M."/>
            <person name="Thangavelu M."/>
            <person name="Johnson D."/>
            <person name="Knights A."/>
            <person name="Loulseged H."/>
            <person name="Mungall K.L."/>
            <person name="Oliver K."/>
            <person name="Price C."/>
            <person name="Quail M.A."/>
            <person name="Urushihara H."/>
            <person name="Hernandez J."/>
            <person name="Rabbinowitsch E."/>
            <person name="Steffen D."/>
            <person name="Sanders M."/>
            <person name="Ma J."/>
            <person name="Kohara Y."/>
            <person name="Sharp S."/>
            <person name="Simmonds M.N."/>
            <person name="Spiegler S."/>
            <person name="Tivey A."/>
            <person name="Sugano S."/>
            <person name="White B."/>
            <person name="Walker D."/>
            <person name="Woodward J.R."/>
            <person name="Winckler T."/>
            <person name="Tanaka Y."/>
            <person name="Shaulsky G."/>
            <person name="Schleicher M."/>
            <person name="Weinstock G.M."/>
            <person name="Rosenthal A."/>
            <person name="Cox E.C."/>
            <person name="Chisholm R.L."/>
            <person name="Gibbs R.A."/>
            <person name="Loomis W.F."/>
            <person name="Platzer M."/>
            <person name="Kay R.R."/>
            <person name="Williams J.G."/>
            <person name="Dear P.H."/>
            <person name="Noegel A.A."/>
            <person name="Barrell B.G."/>
            <person name="Kuspa A."/>
        </authorList>
    </citation>
    <scope>NUCLEOTIDE SEQUENCE [LARGE SCALE GENOMIC DNA]</scope>
    <source>
        <strain>AX4</strain>
    </source>
</reference>